<organism>
    <name type="scientific">Drosophila sechellia</name>
    <name type="common">Fruit fly</name>
    <dbReference type="NCBI Taxonomy" id="7238"/>
    <lineage>
        <taxon>Eukaryota</taxon>
        <taxon>Metazoa</taxon>
        <taxon>Ecdysozoa</taxon>
        <taxon>Arthropoda</taxon>
        <taxon>Hexapoda</taxon>
        <taxon>Insecta</taxon>
        <taxon>Pterygota</taxon>
        <taxon>Neoptera</taxon>
        <taxon>Endopterygota</taxon>
        <taxon>Diptera</taxon>
        <taxon>Brachycera</taxon>
        <taxon>Muscomorpha</taxon>
        <taxon>Ephydroidea</taxon>
        <taxon>Drosophilidae</taxon>
        <taxon>Drosophila</taxon>
        <taxon>Sophophora</taxon>
    </lineage>
</organism>
<accession>B4I3X6</accession>
<sequence>MSSGERVAKVVLVDIEGTTTSISFVHDVLFPYAKQNVEKFLRDFWKEDDIKHIVQDLQQVPKFADYKALLSAPPTEVDIELIAGFVRYLIDQDLKVTPMKTLQGLIWAQGYANGELKGHVYEDVPAAFEAWRAAGLRIAVYSSGSVAAQKLIFGHSLAGNLQPHLSAYFDTHVGHKQEQQSYENIAKQLKEDPKQILFLTDIPGEAAAACSAGLQAIILQRPGNAALADDQKASFELIPDFKPLHNLKLPINKSQA</sequence>
<proteinExistence type="inferred from homology"/>
<protein>
    <recommendedName>
        <fullName evidence="1">Enolase-phosphatase E1</fullName>
        <ecNumber evidence="1">3.1.3.77</ecNumber>
    </recommendedName>
    <alternativeName>
        <fullName evidence="1">2,3-diketo-5-methylthio-1-phosphopentane phosphatase</fullName>
    </alternativeName>
</protein>
<name>ENOPH_DROSE</name>
<dbReference type="EC" id="3.1.3.77" evidence="1"/>
<dbReference type="EMBL" id="CH480821">
    <property type="protein sequence ID" value="EDW54919.1"/>
    <property type="molecule type" value="Genomic_DNA"/>
</dbReference>
<dbReference type="SMR" id="B4I3X6"/>
<dbReference type="STRING" id="7238.B4I3X6"/>
<dbReference type="EnsemblMetazoa" id="FBtr0193638">
    <property type="protein sequence ID" value="FBpp0192130"/>
    <property type="gene ID" value="FBgn0165599"/>
</dbReference>
<dbReference type="EnsemblMetazoa" id="XM_002038346.2">
    <property type="protein sequence ID" value="XP_002038382.1"/>
    <property type="gene ID" value="LOC6613917"/>
</dbReference>
<dbReference type="GeneID" id="6613917"/>
<dbReference type="KEGG" id="dse:6613917"/>
<dbReference type="CTD" id="40630"/>
<dbReference type="HOGENOM" id="CLU_023273_0_0_1"/>
<dbReference type="OMA" id="LQGMVWE"/>
<dbReference type="OrthoDB" id="21590at7215"/>
<dbReference type="PhylomeDB" id="B4I3X6"/>
<dbReference type="UniPathway" id="UPA00904">
    <property type="reaction ID" value="UER00876"/>
</dbReference>
<dbReference type="UniPathway" id="UPA00904">
    <property type="reaction ID" value="UER00877"/>
</dbReference>
<dbReference type="Proteomes" id="UP000001292">
    <property type="component" value="Unassembled WGS sequence"/>
</dbReference>
<dbReference type="GO" id="GO:0005737">
    <property type="term" value="C:cytoplasm"/>
    <property type="evidence" value="ECO:0007669"/>
    <property type="project" value="UniProtKB-SubCell"/>
</dbReference>
<dbReference type="GO" id="GO:0005634">
    <property type="term" value="C:nucleus"/>
    <property type="evidence" value="ECO:0007669"/>
    <property type="project" value="UniProtKB-SubCell"/>
</dbReference>
<dbReference type="GO" id="GO:0043874">
    <property type="term" value="F:acireductone synthase activity"/>
    <property type="evidence" value="ECO:0007669"/>
    <property type="project" value="UniProtKB-EC"/>
</dbReference>
<dbReference type="GO" id="GO:0000287">
    <property type="term" value="F:magnesium ion binding"/>
    <property type="evidence" value="ECO:0007669"/>
    <property type="project" value="UniProtKB-UniRule"/>
</dbReference>
<dbReference type="GO" id="GO:0019509">
    <property type="term" value="P:L-methionine salvage from methylthioadenosine"/>
    <property type="evidence" value="ECO:0007669"/>
    <property type="project" value="UniProtKB-UniRule"/>
</dbReference>
<dbReference type="CDD" id="cd01629">
    <property type="entry name" value="HAD_EP"/>
    <property type="match status" value="1"/>
</dbReference>
<dbReference type="FunFam" id="1.10.720.60:FF:000007">
    <property type="entry name" value="Enolase-phosphatase E1"/>
    <property type="match status" value="1"/>
</dbReference>
<dbReference type="FunFam" id="3.40.50.1000:FF:000079">
    <property type="entry name" value="Enolase-phosphatase E1"/>
    <property type="match status" value="1"/>
</dbReference>
<dbReference type="Gene3D" id="1.10.720.60">
    <property type="match status" value="1"/>
</dbReference>
<dbReference type="Gene3D" id="3.40.50.1000">
    <property type="entry name" value="HAD superfamily/HAD-like"/>
    <property type="match status" value="1"/>
</dbReference>
<dbReference type="HAMAP" id="MF_01681">
    <property type="entry name" value="Salvage_MtnC"/>
    <property type="match status" value="1"/>
</dbReference>
<dbReference type="HAMAP" id="MF_03117">
    <property type="entry name" value="Salvage_MtnC_euk"/>
    <property type="match status" value="1"/>
</dbReference>
<dbReference type="InterPro" id="IPR023943">
    <property type="entry name" value="Enolase-ppase_E1"/>
</dbReference>
<dbReference type="InterPro" id="IPR027511">
    <property type="entry name" value="ENOPH1_eukaryotes"/>
</dbReference>
<dbReference type="InterPro" id="IPR036412">
    <property type="entry name" value="HAD-like_sf"/>
</dbReference>
<dbReference type="InterPro" id="IPR006439">
    <property type="entry name" value="HAD-SF_hydro_IA"/>
</dbReference>
<dbReference type="InterPro" id="IPR023214">
    <property type="entry name" value="HAD_sf"/>
</dbReference>
<dbReference type="NCBIfam" id="TIGR01691">
    <property type="entry name" value="enolase-ppase"/>
    <property type="match status" value="1"/>
</dbReference>
<dbReference type="PANTHER" id="PTHR20371">
    <property type="entry name" value="ENOLASE-PHOSPHATASE E1"/>
    <property type="match status" value="1"/>
</dbReference>
<dbReference type="PANTHER" id="PTHR20371:SF1">
    <property type="entry name" value="ENOLASE-PHOSPHATASE E1"/>
    <property type="match status" value="1"/>
</dbReference>
<dbReference type="Pfam" id="PF00702">
    <property type="entry name" value="Hydrolase"/>
    <property type="match status" value="1"/>
</dbReference>
<dbReference type="PRINTS" id="PR00413">
    <property type="entry name" value="HADHALOGNASE"/>
</dbReference>
<dbReference type="SFLD" id="SFLDG01129">
    <property type="entry name" value="C1.5:_HAD__Beta-PGM__Phosphata"/>
    <property type="match status" value="1"/>
</dbReference>
<dbReference type="SFLD" id="SFLDF00044">
    <property type="entry name" value="enolase-phosphatase"/>
    <property type="match status" value="1"/>
</dbReference>
<dbReference type="SUPFAM" id="SSF56784">
    <property type="entry name" value="HAD-like"/>
    <property type="match status" value="1"/>
</dbReference>
<keyword id="KW-0028">Amino-acid biosynthesis</keyword>
<keyword id="KW-0963">Cytoplasm</keyword>
<keyword id="KW-0378">Hydrolase</keyword>
<keyword id="KW-0460">Magnesium</keyword>
<keyword id="KW-0479">Metal-binding</keyword>
<keyword id="KW-0486">Methionine biosynthesis</keyword>
<keyword id="KW-0539">Nucleus</keyword>
<keyword id="KW-1185">Reference proteome</keyword>
<reference key="1">
    <citation type="journal article" date="2007" name="Nature">
        <title>Evolution of genes and genomes on the Drosophila phylogeny.</title>
        <authorList>
            <consortium name="Drosophila 12 genomes consortium"/>
        </authorList>
    </citation>
    <scope>NUCLEOTIDE SEQUENCE [LARGE SCALE GENOMIC DNA]</scope>
    <source>
        <strain>Rob3c / Tucson 14021-0248.25</strain>
    </source>
</reference>
<evidence type="ECO:0000255" key="1">
    <source>
        <dbReference type="HAMAP-Rule" id="MF_03117"/>
    </source>
</evidence>
<gene>
    <name type="ORF">GM10653</name>
</gene>
<feature type="chain" id="PRO_0000393983" description="Enolase-phosphatase E1">
    <location>
        <begin position="1"/>
        <end position="256"/>
    </location>
</feature>
<feature type="binding site" evidence="1">
    <location>
        <position position="14"/>
    </location>
    <ligand>
        <name>Mg(2+)</name>
        <dbReference type="ChEBI" id="CHEBI:18420"/>
    </ligand>
</feature>
<feature type="binding site" evidence="1">
    <location>
        <position position="16"/>
    </location>
    <ligand>
        <name>Mg(2+)</name>
        <dbReference type="ChEBI" id="CHEBI:18420"/>
    </ligand>
</feature>
<feature type="binding site" evidence="1">
    <location>
        <begin position="142"/>
        <end position="143"/>
    </location>
    <ligand>
        <name>substrate</name>
    </ligand>
</feature>
<feature type="binding site" evidence="1">
    <location>
        <position position="176"/>
    </location>
    <ligand>
        <name>substrate</name>
    </ligand>
</feature>
<feature type="binding site" evidence="1">
    <location>
        <position position="201"/>
    </location>
    <ligand>
        <name>Mg(2+)</name>
        <dbReference type="ChEBI" id="CHEBI:18420"/>
    </ligand>
</feature>
<comment type="function">
    <text evidence="1">Bifunctional enzyme that catalyzes the enolization of 2,3-diketo-5-methylthiopentyl-1-phosphate (DK-MTP-1-P) into the intermediate 2-hydroxy-3-keto-5-methylthiopentenyl-1-phosphate (HK-MTPenyl-1-P), which is then dephosphorylated to form the acireductone 1,2-dihydroxy-3-keto-5-methylthiopentene (DHK-MTPene).</text>
</comment>
<comment type="catalytic activity">
    <reaction evidence="1">
        <text>5-methylsulfanyl-2,3-dioxopentyl phosphate + H2O = 1,2-dihydroxy-5-(methylsulfanyl)pent-1-en-3-one + phosphate</text>
        <dbReference type="Rhea" id="RHEA:21700"/>
        <dbReference type="ChEBI" id="CHEBI:15377"/>
        <dbReference type="ChEBI" id="CHEBI:43474"/>
        <dbReference type="ChEBI" id="CHEBI:49252"/>
        <dbReference type="ChEBI" id="CHEBI:58828"/>
        <dbReference type="EC" id="3.1.3.77"/>
    </reaction>
</comment>
<comment type="cofactor">
    <cofactor evidence="1">
        <name>Mg(2+)</name>
        <dbReference type="ChEBI" id="CHEBI:18420"/>
    </cofactor>
    <text evidence="1">Binds 1 Mg(2+) ion per subunit.</text>
</comment>
<comment type="pathway">
    <text evidence="1">Amino-acid biosynthesis; L-methionine biosynthesis via salvage pathway; L-methionine from S-methyl-5-thio-alpha-D-ribose 1-phosphate: step 3/6.</text>
</comment>
<comment type="pathway">
    <text evidence="1">Amino-acid biosynthesis; L-methionine biosynthesis via salvage pathway; L-methionine from S-methyl-5-thio-alpha-D-ribose 1-phosphate: step 4/6.</text>
</comment>
<comment type="subunit">
    <text evidence="1">Monomer.</text>
</comment>
<comment type="subcellular location">
    <subcellularLocation>
        <location evidence="1">Cytoplasm</location>
    </subcellularLocation>
    <subcellularLocation>
        <location evidence="1">Nucleus</location>
    </subcellularLocation>
</comment>
<comment type="similarity">
    <text evidence="1">Belongs to the HAD-like hydrolase superfamily. MasA/MtnC family.</text>
</comment>